<keyword id="KW-0963">Cytoplasm</keyword>
<keyword id="KW-0444">Lipid biosynthesis</keyword>
<keyword id="KW-0443">Lipid metabolism</keyword>
<keyword id="KW-0520">NAD</keyword>
<keyword id="KW-0521">NADP</keyword>
<keyword id="KW-0547">Nucleotide-binding</keyword>
<keyword id="KW-0560">Oxidoreductase</keyword>
<keyword id="KW-0594">Phospholipid biosynthesis</keyword>
<keyword id="KW-1208">Phospholipid metabolism</keyword>
<keyword id="KW-1185">Reference proteome</keyword>
<dbReference type="EC" id="1.1.1.94" evidence="1"/>
<dbReference type="EMBL" id="CR954253">
    <property type="protein sequence ID" value="CAI98697.1"/>
    <property type="molecule type" value="Genomic_DNA"/>
</dbReference>
<dbReference type="RefSeq" id="WP_011544250.1">
    <property type="nucleotide sequence ID" value="NC_008054.1"/>
</dbReference>
<dbReference type="SMR" id="Q1G8H5"/>
<dbReference type="STRING" id="390333.Ldb1959"/>
<dbReference type="KEGG" id="ldb:Ldb1959"/>
<dbReference type="PATRIC" id="fig|390333.13.peg.1364"/>
<dbReference type="eggNOG" id="COG0240">
    <property type="taxonomic scope" value="Bacteria"/>
</dbReference>
<dbReference type="HOGENOM" id="CLU_033449_0_2_9"/>
<dbReference type="BioCyc" id="LDEL390333:LDB_RS08520-MONOMER"/>
<dbReference type="UniPathway" id="UPA00940"/>
<dbReference type="Proteomes" id="UP000001259">
    <property type="component" value="Chromosome"/>
</dbReference>
<dbReference type="GO" id="GO:0005829">
    <property type="term" value="C:cytosol"/>
    <property type="evidence" value="ECO:0007669"/>
    <property type="project" value="TreeGrafter"/>
</dbReference>
<dbReference type="GO" id="GO:0047952">
    <property type="term" value="F:glycerol-3-phosphate dehydrogenase [NAD(P)+] activity"/>
    <property type="evidence" value="ECO:0007669"/>
    <property type="project" value="UniProtKB-UniRule"/>
</dbReference>
<dbReference type="GO" id="GO:0051287">
    <property type="term" value="F:NAD binding"/>
    <property type="evidence" value="ECO:0007669"/>
    <property type="project" value="InterPro"/>
</dbReference>
<dbReference type="GO" id="GO:0005975">
    <property type="term" value="P:carbohydrate metabolic process"/>
    <property type="evidence" value="ECO:0007669"/>
    <property type="project" value="InterPro"/>
</dbReference>
<dbReference type="GO" id="GO:0046167">
    <property type="term" value="P:glycerol-3-phosphate biosynthetic process"/>
    <property type="evidence" value="ECO:0007669"/>
    <property type="project" value="UniProtKB-UniRule"/>
</dbReference>
<dbReference type="GO" id="GO:0046168">
    <property type="term" value="P:glycerol-3-phosphate catabolic process"/>
    <property type="evidence" value="ECO:0007669"/>
    <property type="project" value="InterPro"/>
</dbReference>
<dbReference type="GO" id="GO:0006650">
    <property type="term" value="P:glycerophospholipid metabolic process"/>
    <property type="evidence" value="ECO:0007669"/>
    <property type="project" value="UniProtKB-UniRule"/>
</dbReference>
<dbReference type="GO" id="GO:0008654">
    <property type="term" value="P:phospholipid biosynthetic process"/>
    <property type="evidence" value="ECO:0007669"/>
    <property type="project" value="UniProtKB-KW"/>
</dbReference>
<dbReference type="FunFam" id="1.10.1040.10:FF:000001">
    <property type="entry name" value="Glycerol-3-phosphate dehydrogenase [NAD(P)+]"/>
    <property type="match status" value="1"/>
</dbReference>
<dbReference type="FunFam" id="3.40.50.720:FF:000019">
    <property type="entry name" value="Glycerol-3-phosphate dehydrogenase [NAD(P)+]"/>
    <property type="match status" value="1"/>
</dbReference>
<dbReference type="Gene3D" id="1.10.1040.10">
    <property type="entry name" value="N-(1-d-carboxylethyl)-l-norvaline Dehydrogenase, domain 2"/>
    <property type="match status" value="1"/>
</dbReference>
<dbReference type="Gene3D" id="3.40.50.720">
    <property type="entry name" value="NAD(P)-binding Rossmann-like Domain"/>
    <property type="match status" value="1"/>
</dbReference>
<dbReference type="HAMAP" id="MF_00394">
    <property type="entry name" value="NAD_Glyc3P_dehydrog"/>
    <property type="match status" value="1"/>
</dbReference>
<dbReference type="InterPro" id="IPR008927">
    <property type="entry name" value="6-PGluconate_DH-like_C_sf"/>
</dbReference>
<dbReference type="InterPro" id="IPR013328">
    <property type="entry name" value="6PGD_dom2"/>
</dbReference>
<dbReference type="InterPro" id="IPR006168">
    <property type="entry name" value="G3P_DH_NAD-dep"/>
</dbReference>
<dbReference type="InterPro" id="IPR006109">
    <property type="entry name" value="G3P_DH_NAD-dep_C"/>
</dbReference>
<dbReference type="InterPro" id="IPR011128">
    <property type="entry name" value="G3P_DH_NAD-dep_N"/>
</dbReference>
<dbReference type="InterPro" id="IPR036291">
    <property type="entry name" value="NAD(P)-bd_dom_sf"/>
</dbReference>
<dbReference type="NCBIfam" id="NF000940">
    <property type="entry name" value="PRK00094.1-2"/>
    <property type="match status" value="1"/>
</dbReference>
<dbReference type="NCBIfam" id="NF000942">
    <property type="entry name" value="PRK00094.1-4"/>
    <property type="match status" value="1"/>
</dbReference>
<dbReference type="PANTHER" id="PTHR11728">
    <property type="entry name" value="GLYCEROL-3-PHOSPHATE DEHYDROGENASE"/>
    <property type="match status" value="1"/>
</dbReference>
<dbReference type="PANTHER" id="PTHR11728:SF1">
    <property type="entry name" value="GLYCEROL-3-PHOSPHATE DEHYDROGENASE [NAD(+)] 2, CHLOROPLASTIC"/>
    <property type="match status" value="1"/>
</dbReference>
<dbReference type="Pfam" id="PF07479">
    <property type="entry name" value="NAD_Gly3P_dh_C"/>
    <property type="match status" value="1"/>
</dbReference>
<dbReference type="Pfam" id="PF01210">
    <property type="entry name" value="NAD_Gly3P_dh_N"/>
    <property type="match status" value="1"/>
</dbReference>
<dbReference type="PIRSF" id="PIRSF000114">
    <property type="entry name" value="Glycerol-3-P_dh"/>
    <property type="match status" value="1"/>
</dbReference>
<dbReference type="PRINTS" id="PR00077">
    <property type="entry name" value="GPDHDRGNASE"/>
</dbReference>
<dbReference type="SUPFAM" id="SSF48179">
    <property type="entry name" value="6-phosphogluconate dehydrogenase C-terminal domain-like"/>
    <property type="match status" value="1"/>
</dbReference>
<dbReference type="SUPFAM" id="SSF51735">
    <property type="entry name" value="NAD(P)-binding Rossmann-fold domains"/>
    <property type="match status" value="1"/>
</dbReference>
<dbReference type="PROSITE" id="PS00957">
    <property type="entry name" value="NAD_G3PDH"/>
    <property type="match status" value="1"/>
</dbReference>
<comment type="function">
    <text evidence="1">Catalyzes the reduction of the glycolytic intermediate dihydroxyacetone phosphate (DHAP) to sn-glycerol 3-phosphate (G3P), the key precursor for phospholipid synthesis.</text>
</comment>
<comment type="catalytic activity">
    <reaction evidence="1">
        <text>sn-glycerol 3-phosphate + NAD(+) = dihydroxyacetone phosphate + NADH + H(+)</text>
        <dbReference type="Rhea" id="RHEA:11092"/>
        <dbReference type="ChEBI" id="CHEBI:15378"/>
        <dbReference type="ChEBI" id="CHEBI:57540"/>
        <dbReference type="ChEBI" id="CHEBI:57597"/>
        <dbReference type="ChEBI" id="CHEBI:57642"/>
        <dbReference type="ChEBI" id="CHEBI:57945"/>
        <dbReference type="EC" id="1.1.1.94"/>
    </reaction>
    <physiologicalReaction direction="right-to-left" evidence="1">
        <dbReference type="Rhea" id="RHEA:11094"/>
    </physiologicalReaction>
</comment>
<comment type="catalytic activity">
    <reaction evidence="1">
        <text>sn-glycerol 3-phosphate + NADP(+) = dihydroxyacetone phosphate + NADPH + H(+)</text>
        <dbReference type="Rhea" id="RHEA:11096"/>
        <dbReference type="ChEBI" id="CHEBI:15378"/>
        <dbReference type="ChEBI" id="CHEBI:57597"/>
        <dbReference type="ChEBI" id="CHEBI:57642"/>
        <dbReference type="ChEBI" id="CHEBI:57783"/>
        <dbReference type="ChEBI" id="CHEBI:58349"/>
        <dbReference type="EC" id="1.1.1.94"/>
    </reaction>
    <physiologicalReaction direction="right-to-left" evidence="1">
        <dbReference type="Rhea" id="RHEA:11098"/>
    </physiologicalReaction>
</comment>
<comment type="pathway">
    <text evidence="1">Membrane lipid metabolism; glycerophospholipid metabolism.</text>
</comment>
<comment type="subcellular location">
    <subcellularLocation>
        <location evidence="1">Cytoplasm</location>
    </subcellularLocation>
</comment>
<comment type="similarity">
    <text evidence="1">Belongs to the NAD-dependent glycerol-3-phosphate dehydrogenase family.</text>
</comment>
<organism>
    <name type="scientific">Lactobacillus delbrueckii subsp. bulgaricus (strain ATCC 11842 / DSM 20081 / BCRC 10696 / JCM 1002 / NBRC 13953 / NCIMB 11778 / NCTC 12712 / WDCM 00102 / Lb 14)</name>
    <dbReference type="NCBI Taxonomy" id="390333"/>
    <lineage>
        <taxon>Bacteria</taxon>
        <taxon>Bacillati</taxon>
        <taxon>Bacillota</taxon>
        <taxon>Bacilli</taxon>
        <taxon>Lactobacillales</taxon>
        <taxon>Lactobacillaceae</taxon>
        <taxon>Lactobacillus</taxon>
    </lineage>
</organism>
<name>GPDA2_LACDA</name>
<reference key="1">
    <citation type="journal article" date="2006" name="Proc. Natl. Acad. Sci. U.S.A.">
        <title>The complete genome sequence of Lactobacillus bulgaricus reveals extensive and ongoing reductive evolution.</title>
        <authorList>
            <person name="van de Guchte M."/>
            <person name="Penaud S."/>
            <person name="Grimaldi C."/>
            <person name="Barbe V."/>
            <person name="Bryson K."/>
            <person name="Nicolas P."/>
            <person name="Robert C."/>
            <person name="Oztas S."/>
            <person name="Mangenot S."/>
            <person name="Couloux A."/>
            <person name="Loux V."/>
            <person name="Dervyn R."/>
            <person name="Bossy R."/>
            <person name="Bolotin A."/>
            <person name="Batto J.-M."/>
            <person name="Walunas T."/>
            <person name="Gibrat J.-F."/>
            <person name="Bessieres P."/>
            <person name="Weissenbach J."/>
            <person name="Ehrlich S.D."/>
            <person name="Maguin E."/>
        </authorList>
    </citation>
    <scope>NUCLEOTIDE SEQUENCE [LARGE SCALE GENOMIC DNA]</scope>
    <source>
        <strain>ATCC 11842 / DSM 20081 / BCRC 10696 / JCM 1002 / NBRC 13953 / NCIMB 11778 / NCTC 12712 / WDCM 00102 / Lb 14</strain>
    </source>
</reference>
<feature type="chain" id="PRO_0000255324" description="Glycerol-3-phosphate dehydrogenase [NAD(P)+] 2">
    <location>
        <begin position="1"/>
        <end position="337"/>
    </location>
</feature>
<feature type="active site" description="Proton acceptor" evidence="1">
    <location>
        <position position="194"/>
    </location>
</feature>
<feature type="binding site" evidence="1">
    <location>
        <position position="11"/>
    </location>
    <ligand>
        <name>NADPH</name>
        <dbReference type="ChEBI" id="CHEBI:57783"/>
    </ligand>
</feature>
<feature type="binding site" evidence="1">
    <location>
        <position position="12"/>
    </location>
    <ligand>
        <name>NADPH</name>
        <dbReference type="ChEBI" id="CHEBI:57783"/>
    </ligand>
</feature>
<feature type="binding site" evidence="1">
    <location>
        <position position="105"/>
    </location>
    <ligand>
        <name>NADPH</name>
        <dbReference type="ChEBI" id="CHEBI:57783"/>
    </ligand>
</feature>
<feature type="binding site" evidence="1">
    <location>
        <position position="105"/>
    </location>
    <ligand>
        <name>sn-glycerol 3-phosphate</name>
        <dbReference type="ChEBI" id="CHEBI:57597"/>
    </ligand>
</feature>
<feature type="binding site" evidence="1">
    <location>
        <position position="139"/>
    </location>
    <ligand>
        <name>sn-glycerol 3-phosphate</name>
        <dbReference type="ChEBI" id="CHEBI:57597"/>
    </ligand>
</feature>
<feature type="binding site" evidence="1">
    <location>
        <position position="141"/>
    </location>
    <ligand>
        <name>sn-glycerol 3-phosphate</name>
        <dbReference type="ChEBI" id="CHEBI:57597"/>
    </ligand>
</feature>
<feature type="binding site" evidence="1">
    <location>
        <position position="143"/>
    </location>
    <ligand>
        <name>NADPH</name>
        <dbReference type="ChEBI" id="CHEBI:57783"/>
    </ligand>
</feature>
<feature type="binding site" evidence="1">
    <location>
        <position position="194"/>
    </location>
    <ligand>
        <name>sn-glycerol 3-phosphate</name>
        <dbReference type="ChEBI" id="CHEBI:57597"/>
    </ligand>
</feature>
<feature type="binding site" evidence="1">
    <location>
        <position position="247"/>
    </location>
    <ligand>
        <name>sn-glycerol 3-phosphate</name>
        <dbReference type="ChEBI" id="CHEBI:57597"/>
    </ligand>
</feature>
<feature type="binding site" evidence="1">
    <location>
        <position position="257"/>
    </location>
    <ligand>
        <name>sn-glycerol 3-phosphate</name>
        <dbReference type="ChEBI" id="CHEBI:57597"/>
    </ligand>
</feature>
<feature type="binding site" evidence="1">
    <location>
        <position position="258"/>
    </location>
    <ligand>
        <name>NADPH</name>
        <dbReference type="ChEBI" id="CHEBI:57783"/>
    </ligand>
</feature>
<feature type="binding site" evidence="1">
    <location>
        <position position="258"/>
    </location>
    <ligand>
        <name>sn-glycerol 3-phosphate</name>
        <dbReference type="ChEBI" id="CHEBI:57597"/>
    </ligand>
</feature>
<feature type="binding site" evidence="1">
    <location>
        <position position="259"/>
    </location>
    <ligand>
        <name>sn-glycerol 3-phosphate</name>
        <dbReference type="ChEBI" id="CHEBI:57597"/>
    </ligand>
</feature>
<feature type="binding site" evidence="1">
    <location>
        <position position="282"/>
    </location>
    <ligand>
        <name>NADPH</name>
        <dbReference type="ChEBI" id="CHEBI:57783"/>
    </ligand>
</feature>
<feature type="binding site" evidence="1">
    <location>
        <position position="284"/>
    </location>
    <ligand>
        <name>NADPH</name>
        <dbReference type="ChEBI" id="CHEBI:57783"/>
    </ligand>
</feature>
<evidence type="ECO:0000255" key="1">
    <source>
        <dbReference type="HAMAP-Rule" id="MF_00394"/>
    </source>
</evidence>
<sequence>MAKIGVLGAGTWGMALARMLSNSGHEVTVWSALPQEVDELSRTRRQKNLPGMVIPDEIKFTKEIAEACQDKDIILFAVPSVFVRSIAKTAAAFIPDGQIIVDVAKGIEPDTLLTLTEVIADELNKDGKHGNVHYVAMSGPTHAEEVAKDLPTTIVSACEDQAVAKKVQDVFMNKNMRVYTNSDRLGVELCGALKNVIALASGICSGLGYGDNMRAALIIRGMAEIKRLGLKMGGKEDSFDGLAGMGDLIVTATSKESRNNNAGYLIGKGKSAEEAKKEVGMVVEGINAIPAALELADKYDVEMPIVFAVDAVVNRGADARETVDALMLREKKSEMTK</sequence>
<accession>Q1G8H5</accession>
<gene>
    <name evidence="1" type="primary">gpsA2</name>
    <name type="ordered locus">Ldb1959</name>
</gene>
<proteinExistence type="inferred from homology"/>
<protein>
    <recommendedName>
        <fullName evidence="1">Glycerol-3-phosphate dehydrogenase [NAD(P)+] 2</fullName>
        <ecNumber evidence="1">1.1.1.94</ecNumber>
    </recommendedName>
    <alternativeName>
        <fullName evidence="1">NAD(P)(+)-dependent glycerol-3-phosphate dehydrogenase 2</fullName>
    </alternativeName>
    <alternativeName>
        <fullName evidence="1">NAD(P)H-dependent dihydroxyacetone-phosphate reductase 2</fullName>
    </alternativeName>
</protein>